<feature type="chain" id="PRO_0000120495" description="Ornithine aminotransferase">
    <location>
        <begin position="1"/>
        <end position="414"/>
    </location>
</feature>
<feature type="modified residue" description="N6-(pyridoxal phosphate)lysine" evidence="1">
    <location>
        <position position="262"/>
    </location>
</feature>
<feature type="disulfide bond" description="Reversible" evidence="2">
    <location>
        <begin position="154"/>
        <end position="163"/>
    </location>
</feature>
<accession>Q07805</accession>
<proteinExistence type="evidence at transcript level"/>
<keyword id="KW-0032">Aminotransferase</keyword>
<keyword id="KW-0963">Cytoplasm</keyword>
<keyword id="KW-1015">Disulfide bond</keyword>
<keyword id="KW-0663">Pyridoxal phosphate</keyword>
<keyword id="KW-0808">Transferase</keyword>
<dbReference type="EC" id="2.6.1.13" evidence="2"/>
<dbReference type="EMBL" id="L15426">
    <property type="protein sequence ID" value="AAA16481.1"/>
    <property type="molecule type" value="mRNA"/>
</dbReference>
<dbReference type="SMR" id="Q07805"/>
<dbReference type="UniPathway" id="UPA00098">
    <property type="reaction ID" value="UER00358"/>
</dbReference>
<dbReference type="GO" id="GO:0005737">
    <property type="term" value="C:cytoplasm"/>
    <property type="evidence" value="ECO:0007669"/>
    <property type="project" value="UniProtKB-SubCell"/>
</dbReference>
<dbReference type="GO" id="GO:0042802">
    <property type="term" value="F:identical protein binding"/>
    <property type="evidence" value="ECO:0007669"/>
    <property type="project" value="TreeGrafter"/>
</dbReference>
<dbReference type="GO" id="GO:0004587">
    <property type="term" value="F:ornithine aminotransferase activity"/>
    <property type="evidence" value="ECO:0007669"/>
    <property type="project" value="UniProtKB-EC"/>
</dbReference>
<dbReference type="GO" id="GO:0030170">
    <property type="term" value="F:pyridoxal phosphate binding"/>
    <property type="evidence" value="ECO:0007669"/>
    <property type="project" value="InterPro"/>
</dbReference>
<dbReference type="GO" id="GO:0019544">
    <property type="term" value="P:arginine catabolic process to glutamate"/>
    <property type="evidence" value="ECO:0007669"/>
    <property type="project" value="TreeGrafter"/>
</dbReference>
<dbReference type="GO" id="GO:0010121">
    <property type="term" value="P:arginine catabolic process to proline via ornithine"/>
    <property type="evidence" value="ECO:0007669"/>
    <property type="project" value="TreeGrafter"/>
</dbReference>
<dbReference type="GO" id="GO:0055129">
    <property type="term" value="P:L-proline biosynthetic process"/>
    <property type="evidence" value="ECO:0007669"/>
    <property type="project" value="UniProtKB-UniPathway"/>
</dbReference>
<dbReference type="CDD" id="cd00610">
    <property type="entry name" value="OAT_like"/>
    <property type="match status" value="1"/>
</dbReference>
<dbReference type="FunFam" id="3.40.640.10:FF:000011">
    <property type="entry name" value="Ornithine aminotransferase"/>
    <property type="match status" value="1"/>
</dbReference>
<dbReference type="FunFam" id="3.90.1150.10:FF:000152">
    <property type="entry name" value="Ornithine aminotransferase"/>
    <property type="match status" value="1"/>
</dbReference>
<dbReference type="Gene3D" id="3.90.1150.10">
    <property type="entry name" value="Aspartate Aminotransferase, domain 1"/>
    <property type="match status" value="1"/>
</dbReference>
<dbReference type="Gene3D" id="3.40.640.10">
    <property type="entry name" value="Type I PLP-dependent aspartate aminotransferase-like (Major domain)"/>
    <property type="match status" value="1"/>
</dbReference>
<dbReference type="InterPro" id="IPR005814">
    <property type="entry name" value="Aminotrans_3"/>
</dbReference>
<dbReference type="InterPro" id="IPR049704">
    <property type="entry name" value="Aminotrans_3_PPA_site"/>
</dbReference>
<dbReference type="InterPro" id="IPR050103">
    <property type="entry name" value="Class-III_PLP-dep_AT"/>
</dbReference>
<dbReference type="InterPro" id="IPR010164">
    <property type="entry name" value="Orn_aminotrans"/>
</dbReference>
<dbReference type="InterPro" id="IPR015424">
    <property type="entry name" value="PyrdxlP-dep_Trfase"/>
</dbReference>
<dbReference type="InterPro" id="IPR015421">
    <property type="entry name" value="PyrdxlP-dep_Trfase_major"/>
</dbReference>
<dbReference type="InterPro" id="IPR015422">
    <property type="entry name" value="PyrdxlP-dep_Trfase_small"/>
</dbReference>
<dbReference type="NCBIfam" id="TIGR01885">
    <property type="entry name" value="Orn_aminotrans"/>
    <property type="match status" value="1"/>
</dbReference>
<dbReference type="PANTHER" id="PTHR11986">
    <property type="entry name" value="AMINOTRANSFERASE CLASS III"/>
    <property type="match status" value="1"/>
</dbReference>
<dbReference type="PANTHER" id="PTHR11986:SF18">
    <property type="entry name" value="ORNITHINE AMINOTRANSFERASE, MITOCHONDRIAL"/>
    <property type="match status" value="1"/>
</dbReference>
<dbReference type="Pfam" id="PF00202">
    <property type="entry name" value="Aminotran_3"/>
    <property type="match status" value="1"/>
</dbReference>
<dbReference type="PIRSF" id="PIRSF000521">
    <property type="entry name" value="Transaminase_4ab_Lys_Orn"/>
    <property type="match status" value="1"/>
</dbReference>
<dbReference type="SUPFAM" id="SSF53383">
    <property type="entry name" value="PLP-dependent transferases"/>
    <property type="match status" value="1"/>
</dbReference>
<dbReference type="PROSITE" id="PS00600">
    <property type="entry name" value="AA_TRANSFER_CLASS_3"/>
    <property type="match status" value="1"/>
</dbReference>
<comment type="function">
    <text evidence="2">The enzyme has a very narrow substrate specificity and can only catalyze the transamination of alpha-ketoglutarate with ornithine or N-acetylornithine and, to a lesser extent, of glutamate-5-semialdehyde with glutamate and alanine.</text>
</comment>
<comment type="catalytic activity">
    <reaction evidence="2">
        <text>a 2-oxocarboxylate + L-ornithine = L-glutamate 5-semialdehyde + an L-alpha-amino acid</text>
        <dbReference type="Rhea" id="RHEA:13877"/>
        <dbReference type="ChEBI" id="CHEBI:35179"/>
        <dbReference type="ChEBI" id="CHEBI:46911"/>
        <dbReference type="ChEBI" id="CHEBI:58066"/>
        <dbReference type="ChEBI" id="CHEBI:59869"/>
        <dbReference type="EC" id="2.6.1.13"/>
    </reaction>
</comment>
<comment type="catalytic activity">
    <reaction evidence="2">
        <text>L-ornithine + 2-oxoglutarate = L-glutamate 5-semialdehyde + L-glutamate</text>
        <dbReference type="Rhea" id="RHEA:25160"/>
        <dbReference type="ChEBI" id="CHEBI:16810"/>
        <dbReference type="ChEBI" id="CHEBI:29985"/>
        <dbReference type="ChEBI" id="CHEBI:46911"/>
        <dbReference type="ChEBI" id="CHEBI:58066"/>
        <dbReference type="EC" id="2.6.1.13"/>
    </reaction>
    <physiologicalReaction direction="left-to-right" evidence="2">
        <dbReference type="Rhea" id="RHEA:25161"/>
    </physiologicalReaction>
</comment>
<comment type="cofactor">
    <cofactor evidence="1">
        <name>pyridoxal 5'-phosphate</name>
        <dbReference type="ChEBI" id="CHEBI:597326"/>
    </cofactor>
</comment>
<comment type="activity regulation">
    <text evidence="2">Unlike for mammalian OATs, activity is increased by TRX1-mediated reduction of the disulfide bond between Cys-154 and Cys-163. Binding to TRX1 may also induce conformational changes that facilitate substrate binding.</text>
</comment>
<comment type="pathway">
    <text evidence="2">Amino-acid biosynthesis; L-proline biosynthesis; L-glutamate 5-semialdehyde from L-ornithine: step 1/1.</text>
</comment>
<comment type="subunit">
    <text evidence="2">Homodimer.</text>
</comment>
<comment type="subcellular location">
    <subcellularLocation>
        <location evidence="4">Cytoplasm</location>
    </subcellularLocation>
</comment>
<comment type="PTM">
    <text evidence="2">The disulfide bond between Cys-154 and Cys-163 is reduced by TRX1 which increases OAT catalytic activity.</text>
</comment>
<comment type="similarity">
    <text evidence="4">Belongs to the class-III pyridoxal-phosphate-dependent aminotransferase family.</text>
</comment>
<reference key="1">
    <citation type="journal article" date="1993" name="Mol. Biochem. Parasitol.">
        <title>Characterization of a putative ornithine aminotransferase gene of Plasmodium falciparum.</title>
        <authorList>
            <person name="Schmid S.R."/>
            <person name="Linder P."/>
            <person name="Reese R.T."/>
            <person name="Stanley H.A."/>
        </authorList>
    </citation>
    <scope>NUCLEOTIDE SEQUENCE [MRNA]</scope>
</reference>
<sequence>MDFVKELKSSQDYMNNELTYGAHNYDPIPVVLKRGKGVFVYDIEDRRYYDFLSAYSSVNQGHCHPDILNAMINQAKKLTICSRAFFSDSLGVCERYLTNLFGYDKVLMMNTGAEASETAYKLCRKWGYEVKKIPENSAKIIVCNNNFSGRTLGCVSASTDKKCKNNFGPFVPNFLKVPYDDLEALEKELQDPNVCAFIVEPVQGEAGVIVPSDSYFPGVASLCKKYNVLFVADEVQTGLGRTGKLLCTHHYGVKPDVILLGKALSGGHYPISAILANDDVMLVLKPGEHGSTYGGNPLAAAICVEALKVLINEKLCENADKLGAPFLQNLKEQLKDSKVVREVRGKGLLCAIEFKNDLVNVWDICLKFKENGLITRSVHDKTVRLTPPLCITKEQLDECTEIIVKTVKFFDDNL</sequence>
<protein>
    <recommendedName>
        <fullName evidence="3">Ornithine aminotransferase</fullName>
        <shortName evidence="3">PfOAT</shortName>
        <ecNumber evidence="2">2.6.1.13</ecNumber>
    </recommendedName>
    <alternativeName>
        <fullName evidence="4">Ornithine--oxo-acid aminotransferase</fullName>
    </alternativeName>
</protein>
<evidence type="ECO:0000250" key="1">
    <source>
        <dbReference type="UniProtKB" id="P04181"/>
    </source>
</evidence>
<evidence type="ECO:0000250" key="2">
    <source>
        <dbReference type="UniProtKB" id="Q6LFH8"/>
    </source>
</evidence>
<evidence type="ECO:0000303" key="3">
    <source>
    </source>
</evidence>
<evidence type="ECO:0000305" key="4"/>
<gene>
    <name evidence="3" type="primary">OAT</name>
</gene>
<organism>
    <name type="scientific">Plasmodium falciparum (isolate CDC / Honduras)</name>
    <dbReference type="NCBI Taxonomy" id="5836"/>
    <lineage>
        <taxon>Eukaryota</taxon>
        <taxon>Sar</taxon>
        <taxon>Alveolata</taxon>
        <taxon>Apicomplexa</taxon>
        <taxon>Aconoidasida</taxon>
        <taxon>Haemosporida</taxon>
        <taxon>Plasmodiidae</taxon>
        <taxon>Plasmodium</taxon>
        <taxon>Plasmodium (Laverania)</taxon>
    </lineage>
</organism>
<name>OAT_PLAFD</name>